<feature type="chain" id="PRO_0000350269" description="Probable dual-specificity RNA methyltransferase RlmN">
    <location>
        <begin position="1"/>
        <end position="364"/>
    </location>
</feature>
<feature type="domain" description="Radical SAM core" evidence="2">
    <location>
        <begin position="112"/>
        <end position="350"/>
    </location>
</feature>
<feature type="active site" description="Proton acceptor" evidence="1">
    <location>
        <position position="106"/>
    </location>
</feature>
<feature type="active site" description="S-methylcysteine intermediate" evidence="1">
    <location>
        <position position="356"/>
    </location>
</feature>
<feature type="binding site" evidence="1">
    <location>
        <position position="126"/>
    </location>
    <ligand>
        <name>[4Fe-4S] cluster</name>
        <dbReference type="ChEBI" id="CHEBI:49883"/>
        <note>4Fe-4S-S-AdoMet</note>
    </ligand>
</feature>
<feature type="binding site" evidence="1">
    <location>
        <position position="130"/>
    </location>
    <ligand>
        <name>[4Fe-4S] cluster</name>
        <dbReference type="ChEBI" id="CHEBI:49883"/>
        <note>4Fe-4S-S-AdoMet</note>
    </ligand>
</feature>
<feature type="binding site" evidence="1">
    <location>
        <position position="133"/>
    </location>
    <ligand>
        <name>[4Fe-4S] cluster</name>
        <dbReference type="ChEBI" id="CHEBI:49883"/>
        <note>4Fe-4S-S-AdoMet</note>
    </ligand>
</feature>
<feature type="binding site" evidence="1">
    <location>
        <begin position="177"/>
        <end position="178"/>
    </location>
    <ligand>
        <name>S-adenosyl-L-methionine</name>
        <dbReference type="ChEBI" id="CHEBI:59789"/>
    </ligand>
</feature>
<feature type="binding site" evidence="1">
    <location>
        <position position="211"/>
    </location>
    <ligand>
        <name>S-adenosyl-L-methionine</name>
        <dbReference type="ChEBI" id="CHEBI:59789"/>
    </ligand>
</feature>
<feature type="binding site" evidence="1">
    <location>
        <begin position="234"/>
        <end position="236"/>
    </location>
    <ligand>
        <name>S-adenosyl-L-methionine</name>
        <dbReference type="ChEBI" id="CHEBI:59789"/>
    </ligand>
</feature>
<feature type="binding site" evidence="1">
    <location>
        <position position="313"/>
    </location>
    <ligand>
        <name>S-adenosyl-L-methionine</name>
        <dbReference type="ChEBI" id="CHEBI:59789"/>
    </ligand>
</feature>
<feature type="disulfide bond" description="(transient)" evidence="1">
    <location>
        <begin position="119"/>
        <end position="356"/>
    </location>
</feature>
<organism>
    <name type="scientific">Mycobacterium ulcerans (strain Agy99)</name>
    <dbReference type="NCBI Taxonomy" id="362242"/>
    <lineage>
        <taxon>Bacteria</taxon>
        <taxon>Bacillati</taxon>
        <taxon>Actinomycetota</taxon>
        <taxon>Actinomycetes</taxon>
        <taxon>Mycobacteriales</taxon>
        <taxon>Mycobacteriaceae</taxon>
        <taxon>Mycobacterium</taxon>
        <taxon>Mycobacterium ulcerans group</taxon>
    </lineage>
</organism>
<sequence>MAQELMFEEPRRGKPPRHLADFDAEGRASAVAALGLPPFRAKQLAHQYYGRLIADPRQMTDLPAAVRDQIAETMFPNLLTAAREVTCDAGQTRKTLWRATDGVTVESVLMRYPQRNTVCISSQAGCGMACPFCATGQGGLTRNLSTAEIVEQVRAAAAALRDEFGDRLSNVVFMGLGEPLANYARVLAAVRRITEPPPTGFGISARSVTVSTVGLAPAIRKLADERLGVTLALSLHAPDDELRDTLVPVNNRWKISEALEAAHYYAEVTGRRVSVEYALIREVNDQPWRADLLGKRLHGALGPLVHVNLIPLNPTPGSDWDASPKPVEREFVKRVRAQGVSCTVRDTRGREISAACGQLAAEGG</sequence>
<gene>
    <name evidence="1" type="primary">rlmN</name>
    <name type="ordered locus">MUL_2078</name>
</gene>
<dbReference type="EC" id="2.1.1.192" evidence="1"/>
<dbReference type="EMBL" id="CP000325">
    <property type="protein sequence ID" value="ABL04508.1"/>
    <property type="molecule type" value="Genomic_DNA"/>
</dbReference>
<dbReference type="RefSeq" id="WP_011740125.1">
    <property type="nucleotide sequence ID" value="NC_008611.1"/>
</dbReference>
<dbReference type="SMR" id="A0PQ89"/>
<dbReference type="KEGG" id="mul:MUL_2078"/>
<dbReference type="eggNOG" id="COG0820">
    <property type="taxonomic scope" value="Bacteria"/>
</dbReference>
<dbReference type="HOGENOM" id="CLU_029101_0_2_11"/>
<dbReference type="Proteomes" id="UP000000765">
    <property type="component" value="Chromosome"/>
</dbReference>
<dbReference type="GO" id="GO:0005737">
    <property type="term" value="C:cytoplasm"/>
    <property type="evidence" value="ECO:0007669"/>
    <property type="project" value="UniProtKB-SubCell"/>
</dbReference>
<dbReference type="GO" id="GO:0051539">
    <property type="term" value="F:4 iron, 4 sulfur cluster binding"/>
    <property type="evidence" value="ECO:0007669"/>
    <property type="project" value="UniProtKB-UniRule"/>
</dbReference>
<dbReference type="GO" id="GO:0046872">
    <property type="term" value="F:metal ion binding"/>
    <property type="evidence" value="ECO:0007669"/>
    <property type="project" value="UniProtKB-KW"/>
</dbReference>
<dbReference type="GO" id="GO:0070040">
    <property type="term" value="F:rRNA (adenine(2503)-C2-)-methyltransferase activity"/>
    <property type="evidence" value="ECO:0007669"/>
    <property type="project" value="UniProtKB-UniRule"/>
</dbReference>
<dbReference type="GO" id="GO:0019843">
    <property type="term" value="F:rRNA binding"/>
    <property type="evidence" value="ECO:0007669"/>
    <property type="project" value="UniProtKB-UniRule"/>
</dbReference>
<dbReference type="GO" id="GO:0002935">
    <property type="term" value="F:tRNA (adenine(37)-C2)-methyltransferase activity"/>
    <property type="evidence" value="ECO:0007669"/>
    <property type="project" value="UniProtKB-UniRule"/>
</dbReference>
<dbReference type="GO" id="GO:0000049">
    <property type="term" value="F:tRNA binding"/>
    <property type="evidence" value="ECO:0007669"/>
    <property type="project" value="UniProtKB-UniRule"/>
</dbReference>
<dbReference type="GO" id="GO:0070475">
    <property type="term" value="P:rRNA base methylation"/>
    <property type="evidence" value="ECO:0007669"/>
    <property type="project" value="UniProtKB-UniRule"/>
</dbReference>
<dbReference type="GO" id="GO:0030488">
    <property type="term" value="P:tRNA methylation"/>
    <property type="evidence" value="ECO:0007669"/>
    <property type="project" value="UniProtKB-UniRule"/>
</dbReference>
<dbReference type="CDD" id="cd01335">
    <property type="entry name" value="Radical_SAM"/>
    <property type="match status" value="1"/>
</dbReference>
<dbReference type="FunFam" id="3.20.20.70:FF:000014">
    <property type="entry name" value="Probable dual-specificity RNA methyltransferase RlmN"/>
    <property type="match status" value="1"/>
</dbReference>
<dbReference type="Gene3D" id="1.10.150.530">
    <property type="match status" value="1"/>
</dbReference>
<dbReference type="Gene3D" id="3.20.20.70">
    <property type="entry name" value="Aldolase class I"/>
    <property type="match status" value="1"/>
</dbReference>
<dbReference type="HAMAP" id="MF_01849">
    <property type="entry name" value="RNA_methyltr_RlmN"/>
    <property type="match status" value="1"/>
</dbReference>
<dbReference type="InterPro" id="IPR013785">
    <property type="entry name" value="Aldolase_TIM"/>
</dbReference>
<dbReference type="InterPro" id="IPR040072">
    <property type="entry name" value="Methyltransferase_A"/>
</dbReference>
<dbReference type="InterPro" id="IPR027492">
    <property type="entry name" value="RNA_MTrfase_RlmN"/>
</dbReference>
<dbReference type="InterPro" id="IPR004383">
    <property type="entry name" value="rRNA_lsu_MTrfase_RlmN/Cfr"/>
</dbReference>
<dbReference type="InterPro" id="IPR007197">
    <property type="entry name" value="rSAM"/>
</dbReference>
<dbReference type="NCBIfam" id="TIGR00048">
    <property type="entry name" value="rRNA_mod_RlmN"/>
    <property type="match status" value="1"/>
</dbReference>
<dbReference type="PANTHER" id="PTHR30544">
    <property type="entry name" value="23S RRNA METHYLTRANSFERASE"/>
    <property type="match status" value="1"/>
</dbReference>
<dbReference type="PANTHER" id="PTHR30544:SF5">
    <property type="entry name" value="RADICAL SAM CORE DOMAIN-CONTAINING PROTEIN"/>
    <property type="match status" value="1"/>
</dbReference>
<dbReference type="Pfam" id="PF04055">
    <property type="entry name" value="Radical_SAM"/>
    <property type="match status" value="1"/>
</dbReference>
<dbReference type="PIRSF" id="PIRSF006004">
    <property type="entry name" value="CHP00048"/>
    <property type="match status" value="1"/>
</dbReference>
<dbReference type="SFLD" id="SFLDF00275">
    <property type="entry name" value="adenosine_C2_methyltransferase"/>
    <property type="match status" value="1"/>
</dbReference>
<dbReference type="SFLD" id="SFLDG01062">
    <property type="entry name" value="methyltransferase_(Class_A)"/>
    <property type="match status" value="1"/>
</dbReference>
<dbReference type="SUPFAM" id="SSF102114">
    <property type="entry name" value="Radical SAM enzymes"/>
    <property type="match status" value="1"/>
</dbReference>
<dbReference type="PROSITE" id="PS51918">
    <property type="entry name" value="RADICAL_SAM"/>
    <property type="match status" value="1"/>
</dbReference>
<name>RLMN_MYCUA</name>
<accession>A0PQ89</accession>
<proteinExistence type="inferred from homology"/>
<reference key="1">
    <citation type="journal article" date="2007" name="Genome Res.">
        <title>Reductive evolution and niche adaptation inferred from the genome of Mycobacterium ulcerans, the causative agent of Buruli ulcer.</title>
        <authorList>
            <person name="Stinear T.P."/>
            <person name="Seemann T."/>
            <person name="Pidot S."/>
            <person name="Frigui W."/>
            <person name="Reysset G."/>
            <person name="Garnier T."/>
            <person name="Meurice G."/>
            <person name="Simon D."/>
            <person name="Bouchier C."/>
            <person name="Ma L."/>
            <person name="Tichit M."/>
            <person name="Porter J.L."/>
            <person name="Ryan J."/>
            <person name="Johnson P.D.R."/>
            <person name="Davies J.K."/>
            <person name="Jenkin G.A."/>
            <person name="Small P.L.C."/>
            <person name="Jones L.M."/>
            <person name="Tekaia F."/>
            <person name="Laval F."/>
            <person name="Daffe M."/>
            <person name="Parkhill J."/>
            <person name="Cole S.T."/>
        </authorList>
    </citation>
    <scope>NUCLEOTIDE SEQUENCE [LARGE SCALE GENOMIC DNA]</scope>
    <source>
        <strain>Agy99</strain>
    </source>
</reference>
<keyword id="KW-0004">4Fe-4S</keyword>
<keyword id="KW-0963">Cytoplasm</keyword>
<keyword id="KW-1015">Disulfide bond</keyword>
<keyword id="KW-0408">Iron</keyword>
<keyword id="KW-0411">Iron-sulfur</keyword>
<keyword id="KW-0479">Metal-binding</keyword>
<keyword id="KW-0489">Methyltransferase</keyword>
<keyword id="KW-0698">rRNA processing</keyword>
<keyword id="KW-0949">S-adenosyl-L-methionine</keyword>
<keyword id="KW-0808">Transferase</keyword>
<keyword id="KW-0819">tRNA processing</keyword>
<comment type="function">
    <text evidence="1">Specifically methylates position 2 of adenine 2503 in 23S rRNA and position 2 of adenine 37 in tRNAs.</text>
</comment>
<comment type="catalytic activity">
    <reaction evidence="1">
        <text>adenosine(2503) in 23S rRNA + 2 reduced [2Fe-2S]-[ferredoxin] + 2 S-adenosyl-L-methionine = 2-methyladenosine(2503) in 23S rRNA + 5'-deoxyadenosine + L-methionine + 2 oxidized [2Fe-2S]-[ferredoxin] + S-adenosyl-L-homocysteine</text>
        <dbReference type="Rhea" id="RHEA:42916"/>
        <dbReference type="Rhea" id="RHEA-COMP:10000"/>
        <dbReference type="Rhea" id="RHEA-COMP:10001"/>
        <dbReference type="Rhea" id="RHEA-COMP:10152"/>
        <dbReference type="Rhea" id="RHEA-COMP:10282"/>
        <dbReference type="ChEBI" id="CHEBI:17319"/>
        <dbReference type="ChEBI" id="CHEBI:33737"/>
        <dbReference type="ChEBI" id="CHEBI:33738"/>
        <dbReference type="ChEBI" id="CHEBI:57844"/>
        <dbReference type="ChEBI" id="CHEBI:57856"/>
        <dbReference type="ChEBI" id="CHEBI:59789"/>
        <dbReference type="ChEBI" id="CHEBI:74411"/>
        <dbReference type="ChEBI" id="CHEBI:74497"/>
        <dbReference type="EC" id="2.1.1.192"/>
    </reaction>
</comment>
<comment type="catalytic activity">
    <reaction evidence="1">
        <text>adenosine(37) in tRNA + 2 reduced [2Fe-2S]-[ferredoxin] + 2 S-adenosyl-L-methionine = 2-methyladenosine(37) in tRNA + 5'-deoxyadenosine + L-methionine + 2 oxidized [2Fe-2S]-[ferredoxin] + S-adenosyl-L-homocysteine</text>
        <dbReference type="Rhea" id="RHEA:43332"/>
        <dbReference type="Rhea" id="RHEA-COMP:10000"/>
        <dbReference type="Rhea" id="RHEA-COMP:10001"/>
        <dbReference type="Rhea" id="RHEA-COMP:10162"/>
        <dbReference type="Rhea" id="RHEA-COMP:10485"/>
        <dbReference type="ChEBI" id="CHEBI:17319"/>
        <dbReference type="ChEBI" id="CHEBI:33737"/>
        <dbReference type="ChEBI" id="CHEBI:33738"/>
        <dbReference type="ChEBI" id="CHEBI:57844"/>
        <dbReference type="ChEBI" id="CHEBI:57856"/>
        <dbReference type="ChEBI" id="CHEBI:59789"/>
        <dbReference type="ChEBI" id="CHEBI:74411"/>
        <dbReference type="ChEBI" id="CHEBI:74497"/>
        <dbReference type="EC" id="2.1.1.192"/>
    </reaction>
</comment>
<comment type="cofactor">
    <cofactor evidence="1">
        <name>[4Fe-4S] cluster</name>
        <dbReference type="ChEBI" id="CHEBI:49883"/>
    </cofactor>
    <text evidence="1">Binds 1 [4Fe-4S] cluster. The cluster is coordinated with 3 cysteines and an exchangeable S-adenosyl-L-methionine.</text>
</comment>
<comment type="subcellular location">
    <subcellularLocation>
        <location evidence="1">Cytoplasm</location>
    </subcellularLocation>
</comment>
<comment type="miscellaneous">
    <text evidence="1">Reaction proceeds by a ping-pong mechanism involving intermediate methylation of a conserved cysteine residue.</text>
</comment>
<comment type="similarity">
    <text evidence="1">Belongs to the radical SAM superfamily. RlmN family.</text>
</comment>
<evidence type="ECO:0000255" key="1">
    <source>
        <dbReference type="HAMAP-Rule" id="MF_01849"/>
    </source>
</evidence>
<evidence type="ECO:0000255" key="2">
    <source>
        <dbReference type="PROSITE-ProRule" id="PRU01266"/>
    </source>
</evidence>
<protein>
    <recommendedName>
        <fullName evidence="1">Probable dual-specificity RNA methyltransferase RlmN</fullName>
        <ecNumber evidence="1">2.1.1.192</ecNumber>
    </recommendedName>
    <alternativeName>
        <fullName evidence="1">23S rRNA (adenine(2503)-C(2))-methyltransferase</fullName>
    </alternativeName>
    <alternativeName>
        <fullName evidence="1">23S rRNA m2A2503 methyltransferase</fullName>
    </alternativeName>
    <alternativeName>
        <fullName evidence="1">Ribosomal RNA large subunit methyltransferase N</fullName>
    </alternativeName>
    <alternativeName>
        <fullName evidence="1">tRNA (adenine(37)-C(2))-methyltransferase</fullName>
    </alternativeName>
    <alternativeName>
        <fullName evidence="1">tRNA m2A37 methyltransferase</fullName>
    </alternativeName>
</protein>